<proteinExistence type="inferred from homology"/>
<reference key="1">
    <citation type="submission" date="2006-12" db="EMBL/GenBank/DDBJ databases">
        <title>Complete sequence of Shewanella sp. W3-18-1.</title>
        <authorList>
            <consortium name="US DOE Joint Genome Institute"/>
            <person name="Copeland A."/>
            <person name="Lucas S."/>
            <person name="Lapidus A."/>
            <person name="Barry K."/>
            <person name="Detter J.C."/>
            <person name="Glavina del Rio T."/>
            <person name="Hammon N."/>
            <person name="Israni S."/>
            <person name="Dalin E."/>
            <person name="Tice H."/>
            <person name="Pitluck S."/>
            <person name="Chain P."/>
            <person name="Malfatti S."/>
            <person name="Shin M."/>
            <person name="Vergez L."/>
            <person name="Schmutz J."/>
            <person name="Larimer F."/>
            <person name="Land M."/>
            <person name="Hauser L."/>
            <person name="Kyrpides N."/>
            <person name="Lykidis A."/>
            <person name="Tiedje J."/>
            <person name="Richardson P."/>
        </authorList>
    </citation>
    <scope>NUCLEOTIDE SEQUENCE [LARGE SCALE GENOMIC DNA]</scope>
    <source>
        <strain>W3-18-1</strain>
    </source>
</reference>
<dbReference type="EMBL" id="CP000503">
    <property type="protein sequence ID" value="ABM26856.1"/>
    <property type="molecule type" value="Genomic_DNA"/>
</dbReference>
<dbReference type="RefSeq" id="WP_011791277.1">
    <property type="nucleotide sequence ID" value="NC_008750.1"/>
</dbReference>
<dbReference type="SMR" id="A1RQB1"/>
<dbReference type="GeneID" id="67445462"/>
<dbReference type="KEGG" id="shw:Sputw3181_4054"/>
<dbReference type="HOGENOM" id="CLU_050669_0_1_6"/>
<dbReference type="Proteomes" id="UP000002597">
    <property type="component" value="Chromosome"/>
</dbReference>
<dbReference type="GO" id="GO:0005886">
    <property type="term" value="C:plasma membrane"/>
    <property type="evidence" value="ECO:0007669"/>
    <property type="project" value="UniProtKB-SubCell"/>
</dbReference>
<dbReference type="GO" id="GO:0045259">
    <property type="term" value="C:proton-transporting ATP synthase complex"/>
    <property type="evidence" value="ECO:0007669"/>
    <property type="project" value="UniProtKB-KW"/>
</dbReference>
<dbReference type="GO" id="GO:0005524">
    <property type="term" value="F:ATP binding"/>
    <property type="evidence" value="ECO:0007669"/>
    <property type="project" value="UniProtKB-UniRule"/>
</dbReference>
<dbReference type="GO" id="GO:0046933">
    <property type="term" value="F:proton-transporting ATP synthase activity, rotational mechanism"/>
    <property type="evidence" value="ECO:0007669"/>
    <property type="project" value="UniProtKB-UniRule"/>
</dbReference>
<dbReference type="GO" id="GO:0042777">
    <property type="term" value="P:proton motive force-driven plasma membrane ATP synthesis"/>
    <property type="evidence" value="ECO:0007669"/>
    <property type="project" value="UniProtKB-UniRule"/>
</dbReference>
<dbReference type="CDD" id="cd12151">
    <property type="entry name" value="F1-ATPase_gamma"/>
    <property type="match status" value="1"/>
</dbReference>
<dbReference type="FunFam" id="1.10.287.80:FF:000005">
    <property type="entry name" value="ATP synthase gamma chain"/>
    <property type="match status" value="2"/>
</dbReference>
<dbReference type="FunFam" id="3.40.1380.10:FF:000001">
    <property type="entry name" value="ATP synthase gamma chain"/>
    <property type="match status" value="1"/>
</dbReference>
<dbReference type="Gene3D" id="3.40.1380.10">
    <property type="match status" value="1"/>
</dbReference>
<dbReference type="Gene3D" id="1.10.287.80">
    <property type="entry name" value="ATP synthase, gamma subunit, helix hairpin domain"/>
    <property type="match status" value="1"/>
</dbReference>
<dbReference type="HAMAP" id="MF_00815">
    <property type="entry name" value="ATP_synth_gamma_bact"/>
    <property type="match status" value="1"/>
</dbReference>
<dbReference type="InterPro" id="IPR035968">
    <property type="entry name" value="ATP_synth_F1_ATPase_gsu"/>
</dbReference>
<dbReference type="InterPro" id="IPR000131">
    <property type="entry name" value="ATP_synth_F1_gsu"/>
</dbReference>
<dbReference type="InterPro" id="IPR023632">
    <property type="entry name" value="ATP_synth_F1_gsu_CS"/>
</dbReference>
<dbReference type="NCBIfam" id="TIGR01146">
    <property type="entry name" value="ATPsyn_F1gamma"/>
    <property type="match status" value="1"/>
</dbReference>
<dbReference type="NCBIfam" id="NF004144">
    <property type="entry name" value="PRK05621.1-1"/>
    <property type="match status" value="1"/>
</dbReference>
<dbReference type="PANTHER" id="PTHR11693">
    <property type="entry name" value="ATP SYNTHASE GAMMA CHAIN"/>
    <property type="match status" value="1"/>
</dbReference>
<dbReference type="PANTHER" id="PTHR11693:SF22">
    <property type="entry name" value="ATP SYNTHASE SUBUNIT GAMMA, MITOCHONDRIAL"/>
    <property type="match status" value="1"/>
</dbReference>
<dbReference type="Pfam" id="PF00231">
    <property type="entry name" value="ATP-synt"/>
    <property type="match status" value="1"/>
</dbReference>
<dbReference type="PRINTS" id="PR00126">
    <property type="entry name" value="ATPASEGAMMA"/>
</dbReference>
<dbReference type="SUPFAM" id="SSF52943">
    <property type="entry name" value="ATP synthase (F1-ATPase), gamma subunit"/>
    <property type="match status" value="1"/>
</dbReference>
<dbReference type="PROSITE" id="PS00153">
    <property type="entry name" value="ATPASE_GAMMA"/>
    <property type="match status" value="1"/>
</dbReference>
<gene>
    <name evidence="1" type="primary">atpG</name>
    <name type="ordered locus">Sputw3181_4054</name>
</gene>
<protein>
    <recommendedName>
        <fullName evidence="1">ATP synthase gamma chain</fullName>
    </recommendedName>
    <alternativeName>
        <fullName evidence="1">ATP synthase F1 sector gamma subunit</fullName>
    </alternativeName>
    <alternativeName>
        <fullName evidence="1">F-ATPase gamma subunit</fullName>
    </alternativeName>
</protein>
<comment type="function">
    <text evidence="1">Produces ATP from ADP in the presence of a proton gradient across the membrane. The gamma chain is believed to be important in regulating ATPase activity and the flow of protons through the CF(0) complex.</text>
</comment>
<comment type="subunit">
    <text evidence="1">F-type ATPases have 2 components, CF(1) - the catalytic core - and CF(0) - the membrane proton channel. CF(1) has five subunits: alpha(3), beta(3), gamma(1), delta(1), epsilon(1). CF(0) has three main subunits: a, b and c.</text>
</comment>
<comment type="subcellular location">
    <subcellularLocation>
        <location evidence="1">Cell inner membrane</location>
        <topology evidence="1">Peripheral membrane protein</topology>
    </subcellularLocation>
</comment>
<comment type="similarity">
    <text evidence="1">Belongs to the ATPase gamma chain family.</text>
</comment>
<evidence type="ECO:0000255" key="1">
    <source>
        <dbReference type="HAMAP-Rule" id="MF_00815"/>
    </source>
</evidence>
<keyword id="KW-0066">ATP synthesis</keyword>
<keyword id="KW-0997">Cell inner membrane</keyword>
<keyword id="KW-1003">Cell membrane</keyword>
<keyword id="KW-0139">CF(1)</keyword>
<keyword id="KW-0375">Hydrogen ion transport</keyword>
<keyword id="KW-0406">Ion transport</keyword>
<keyword id="KW-0472">Membrane</keyword>
<keyword id="KW-0813">Transport</keyword>
<name>ATPG_SHESW</name>
<accession>A1RQB1</accession>
<feature type="chain" id="PRO_1000053334" description="ATP synthase gamma chain">
    <location>
        <begin position="1"/>
        <end position="286"/>
    </location>
</feature>
<sequence>MAGAKEIKTKIASVKNTQKITSAMEMVAASKMRRAQERMAASRPYAESMRKVIGHVAQGSLEYKHPYLEVREAKRVGYIVVATDRGLCGGLNVNLFKKVLLDLKNWKEQGAEVEFCPIGARSVQFFKSFGGTMPAHASGLGDAPSIADLIGTVRVMLKAYNEGKLDRLFIVFNKFVNTMTQAPVIEQLLPLPKSEEVANKHPWDYIYEPDPKVLLDTLLVRYIESQVYQGVVENIASEQAARMVAMKAATDNAGELINDLQLVYNKARQAAITQELSEIVSGASAV</sequence>
<organism>
    <name type="scientific">Shewanella sp. (strain W3-18-1)</name>
    <dbReference type="NCBI Taxonomy" id="351745"/>
    <lineage>
        <taxon>Bacteria</taxon>
        <taxon>Pseudomonadati</taxon>
        <taxon>Pseudomonadota</taxon>
        <taxon>Gammaproteobacteria</taxon>
        <taxon>Alteromonadales</taxon>
        <taxon>Shewanellaceae</taxon>
        <taxon>Shewanella</taxon>
    </lineage>
</organism>